<proteinExistence type="inferred from homology"/>
<sequence>MNLPGPIHDFLLVFLGLGLILGGLGVVLLTNPIFSAFSLGLVLVCISLFYILSNSHFVAAAQLLIYVGAINVLILFAVMFMNGSEYYKDFNLWTVGNGLTSLICTSLFVLLITIISNTTWYGIIWTTRANQIIEQDLVSNGQQIGIHLSTDFFLPFEFISIILLVALIGAIATARQ</sequence>
<organism>
    <name type="scientific">Populus alba</name>
    <name type="common">White poplar</name>
    <dbReference type="NCBI Taxonomy" id="43335"/>
    <lineage>
        <taxon>Eukaryota</taxon>
        <taxon>Viridiplantae</taxon>
        <taxon>Streptophyta</taxon>
        <taxon>Embryophyta</taxon>
        <taxon>Tracheophyta</taxon>
        <taxon>Spermatophyta</taxon>
        <taxon>Magnoliopsida</taxon>
        <taxon>eudicotyledons</taxon>
        <taxon>Gunneridae</taxon>
        <taxon>Pentapetalae</taxon>
        <taxon>rosids</taxon>
        <taxon>fabids</taxon>
        <taxon>Malpighiales</taxon>
        <taxon>Salicaceae</taxon>
        <taxon>Saliceae</taxon>
        <taxon>Populus</taxon>
    </lineage>
</organism>
<protein>
    <recommendedName>
        <fullName>NAD(P)H-quinone oxidoreductase subunit 6, chloroplastic</fullName>
        <ecNumber>7.1.1.-</ecNumber>
    </recommendedName>
    <alternativeName>
        <fullName>NAD(P)H dehydrogenase subunit 6</fullName>
    </alternativeName>
    <alternativeName>
        <fullName>NADH-plastoquinone oxidoreductase subunit 6</fullName>
    </alternativeName>
</protein>
<gene>
    <name type="primary">ndhG</name>
</gene>
<reference key="1">
    <citation type="submission" date="2005-03" db="EMBL/GenBank/DDBJ databases">
        <title>Complete structure of the chloroplast genome of Populus alba.</title>
        <authorList>
            <person name="Okumura S."/>
            <person name="Yamashita A."/>
            <person name="Kanamoto H."/>
            <person name="Hattori M."/>
            <person name="Takase H."/>
            <person name="Tomizawa K."/>
        </authorList>
    </citation>
    <scope>NUCLEOTIDE SEQUENCE [LARGE SCALE GENOMIC DNA]</scope>
</reference>
<name>NU6C_POPAL</name>
<feature type="chain" id="PRO_0000360287" description="NAD(P)H-quinone oxidoreductase subunit 6, chloroplastic">
    <location>
        <begin position="1"/>
        <end position="176"/>
    </location>
</feature>
<feature type="transmembrane region" description="Helical" evidence="2">
    <location>
        <begin position="10"/>
        <end position="30"/>
    </location>
</feature>
<feature type="transmembrane region" description="Helical" evidence="2">
    <location>
        <begin position="32"/>
        <end position="52"/>
    </location>
</feature>
<feature type="transmembrane region" description="Helical" evidence="2">
    <location>
        <begin position="61"/>
        <end position="81"/>
    </location>
</feature>
<feature type="transmembrane region" description="Helical" evidence="2">
    <location>
        <begin position="95"/>
        <end position="115"/>
    </location>
</feature>
<feature type="transmembrane region" description="Helical" evidence="2">
    <location>
        <begin position="152"/>
        <end position="172"/>
    </location>
</feature>
<comment type="function">
    <text evidence="1">NDH shuttles electrons from NAD(P)H:plastoquinone, via FMN and iron-sulfur (Fe-S) centers, to quinones in the photosynthetic chain and possibly in a chloroplast respiratory chain. The immediate electron acceptor for the enzyme in this species is believed to be plastoquinone. Couples the redox reaction to proton translocation, and thus conserves the redox energy in a proton gradient (By similarity).</text>
</comment>
<comment type="catalytic activity">
    <reaction>
        <text>a plastoquinone + NADH + (n+1) H(+)(in) = a plastoquinol + NAD(+) + n H(+)(out)</text>
        <dbReference type="Rhea" id="RHEA:42608"/>
        <dbReference type="Rhea" id="RHEA-COMP:9561"/>
        <dbReference type="Rhea" id="RHEA-COMP:9562"/>
        <dbReference type="ChEBI" id="CHEBI:15378"/>
        <dbReference type="ChEBI" id="CHEBI:17757"/>
        <dbReference type="ChEBI" id="CHEBI:57540"/>
        <dbReference type="ChEBI" id="CHEBI:57945"/>
        <dbReference type="ChEBI" id="CHEBI:62192"/>
    </reaction>
</comment>
<comment type="catalytic activity">
    <reaction>
        <text>a plastoquinone + NADPH + (n+1) H(+)(in) = a plastoquinol + NADP(+) + n H(+)(out)</text>
        <dbReference type="Rhea" id="RHEA:42612"/>
        <dbReference type="Rhea" id="RHEA-COMP:9561"/>
        <dbReference type="Rhea" id="RHEA-COMP:9562"/>
        <dbReference type="ChEBI" id="CHEBI:15378"/>
        <dbReference type="ChEBI" id="CHEBI:17757"/>
        <dbReference type="ChEBI" id="CHEBI:57783"/>
        <dbReference type="ChEBI" id="CHEBI:58349"/>
        <dbReference type="ChEBI" id="CHEBI:62192"/>
    </reaction>
</comment>
<comment type="subunit">
    <text evidence="1">NDH is composed of at least 16 different subunits, 5 of which are encoded in the nucleus.</text>
</comment>
<comment type="subcellular location">
    <subcellularLocation>
        <location evidence="1">Plastid</location>
        <location evidence="1">Chloroplast thylakoid membrane</location>
        <topology evidence="1">Multi-pass membrane protein</topology>
    </subcellularLocation>
</comment>
<comment type="similarity">
    <text evidence="3">Belongs to the complex I subunit 6 family.</text>
</comment>
<geneLocation type="chloroplast"/>
<evidence type="ECO:0000250" key="1"/>
<evidence type="ECO:0000255" key="2"/>
<evidence type="ECO:0000305" key="3"/>
<dbReference type="EC" id="7.1.1.-"/>
<dbReference type="EMBL" id="AP008956">
    <property type="protein sequence ID" value="BAE97257.1"/>
    <property type="molecule type" value="Genomic_DNA"/>
</dbReference>
<dbReference type="RefSeq" id="YP_665609.1">
    <property type="nucleotide sequence ID" value="NC_008235.1"/>
</dbReference>
<dbReference type="SMR" id="Q14FA5"/>
<dbReference type="GeneID" id="4178233"/>
<dbReference type="KEGG" id="palz:4178233"/>
<dbReference type="OrthoDB" id="33232at3646"/>
<dbReference type="GO" id="GO:0009535">
    <property type="term" value="C:chloroplast thylakoid membrane"/>
    <property type="evidence" value="ECO:0007669"/>
    <property type="project" value="UniProtKB-SubCell"/>
</dbReference>
<dbReference type="GO" id="GO:0008137">
    <property type="term" value="F:NADH dehydrogenase (ubiquinone) activity"/>
    <property type="evidence" value="ECO:0007669"/>
    <property type="project" value="InterPro"/>
</dbReference>
<dbReference type="GO" id="GO:0048038">
    <property type="term" value="F:quinone binding"/>
    <property type="evidence" value="ECO:0007669"/>
    <property type="project" value="UniProtKB-KW"/>
</dbReference>
<dbReference type="FunFam" id="1.20.120.1200:FF:000002">
    <property type="entry name" value="NAD(P)H-quinone oxidoreductase subunit 6, chloroplastic"/>
    <property type="match status" value="1"/>
</dbReference>
<dbReference type="Gene3D" id="1.20.120.1200">
    <property type="entry name" value="NADH-ubiquinone/plastoquinone oxidoreductase chain 6, subunit NuoJ"/>
    <property type="match status" value="1"/>
</dbReference>
<dbReference type="InterPro" id="IPR050290">
    <property type="entry name" value="NAD(P)H-Q_Oxidoreduct_6"/>
</dbReference>
<dbReference type="InterPro" id="IPR001457">
    <property type="entry name" value="NADH_UbQ/plastoQ_OxRdtase_su6"/>
</dbReference>
<dbReference type="InterPro" id="IPR042106">
    <property type="entry name" value="Nuo/plastoQ_OxRdtase_6_NuoJ"/>
</dbReference>
<dbReference type="PANTHER" id="PTHR48479">
    <property type="entry name" value="NAD(P)H-QUINONE OXIDOREDUCTASE SUBUNIT 6, CHLOROPLASTIC"/>
    <property type="match status" value="1"/>
</dbReference>
<dbReference type="PANTHER" id="PTHR48479:SF1">
    <property type="entry name" value="NAD(P)H-QUINONE OXIDOREDUCTASE SUBUNIT 6, CHLOROPLASTIC"/>
    <property type="match status" value="1"/>
</dbReference>
<dbReference type="Pfam" id="PF00499">
    <property type="entry name" value="Oxidored_q3"/>
    <property type="match status" value="1"/>
</dbReference>
<keyword id="KW-0150">Chloroplast</keyword>
<keyword id="KW-0472">Membrane</keyword>
<keyword id="KW-0520">NAD</keyword>
<keyword id="KW-0521">NADP</keyword>
<keyword id="KW-0934">Plastid</keyword>
<keyword id="KW-0618">Plastoquinone</keyword>
<keyword id="KW-0874">Quinone</keyword>
<keyword id="KW-0793">Thylakoid</keyword>
<keyword id="KW-1278">Translocase</keyword>
<keyword id="KW-0812">Transmembrane</keyword>
<keyword id="KW-1133">Transmembrane helix</keyword>
<keyword id="KW-0813">Transport</keyword>
<accession>Q14FA5</accession>